<accession>Q9CMR2</accession>
<feature type="chain" id="PRO_0000182327" description="Transcriptional repressor NrdR">
    <location>
        <begin position="1"/>
        <end position="149"/>
    </location>
</feature>
<feature type="domain" description="ATP-cone" evidence="1">
    <location>
        <begin position="49"/>
        <end position="139"/>
    </location>
</feature>
<feature type="zinc finger region" evidence="1">
    <location>
        <begin position="3"/>
        <end position="34"/>
    </location>
</feature>
<gene>
    <name evidence="1" type="primary">nrdR</name>
    <name type="ordered locus">PM0750</name>
</gene>
<reference key="1">
    <citation type="journal article" date="2001" name="Proc. Natl. Acad. Sci. U.S.A.">
        <title>Complete genomic sequence of Pasteurella multocida Pm70.</title>
        <authorList>
            <person name="May B.J."/>
            <person name="Zhang Q."/>
            <person name="Li L.L."/>
            <person name="Paustian M.L."/>
            <person name="Whittam T.S."/>
            <person name="Kapur V."/>
        </authorList>
    </citation>
    <scope>NUCLEOTIDE SEQUENCE [LARGE SCALE GENOMIC DNA]</scope>
    <source>
        <strain>Pm70</strain>
    </source>
</reference>
<comment type="function">
    <text evidence="1">Negatively regulates transcription of bacterial ribonucleotide reductase nrd genes and operons by binding to NrdR-boxes.</text>
</comment>
<comment type="cofactor">
    <cofactor evidence="1">
        <name>Zn(2+)</name>
        <dbReference type="ChEBI" id="CHEBI:29105"/>
    </cofactor>
    <text evidence="1">Binds 1 zinc ion.</text>
</comment>
<comment type="similarity">
    <text evidence="1">Belongs to the NrdR family.</text>
</comment>
<sequence length="149" mass="17462">MHCPFCSTEETKVIDSRLVSEGYQVRRRRECGNCHERFTTFETAELIIPKVIKNDGTREPFNEEKLRRGIQHALEKRPVSENDVEKAISYIIHRLRSTGEREVPSKLVGTLVMEELKKLDKVAYIRFASVYLSFDDINQFSKEIEKLRD</sequence>
<organism>
    <name type="scientific">Pasteurella multocida (strain Pm70)</name>
    <dbReference type="NCBI Taxonomy" id="272843"/>
    <lineage>
        <taxon>Bacteria</taxon>
        <taxon>Pseudomonadati</taxon>
        <taxon>Pseudomonadota</taxon>
        <taxon>Gammaproteobacteria</taxon>
        <taxon>Pasteurellales</taxon>
        <taxon>Pasteurellaceae</taxon>
        <taxon>Pasteurella</taxon>
    </lineage>
</organism>
<name>NRDR_PASMU</name>
<protein>
    <recommendedName>
        <fullName evidence="1">Transcriptional repressor NrdR</fullName>
    </recommendedName>
</protein>
<proteinExistence type="inferred from homology"/>
<keyword id="KW-0067">ATP-binding</keyword>
<keyword id="KW-0238">DNA-binding</keyword>
<keyword id="KW-0479">Metal-binding</keyword>
<keyword id="KW-0547">Nucleotide-binding</keyword>
<keyword id="KW-1185">Reference proteome</keyword>
<keyword id="KW-0678">Repressor</keyword>
<keyword id="KW-0804">Transcription</keyword>
<keyword id="KW-0805">Transcription regulation</keyword>
<keyword id="KW-0862">Zinc</keyword>
<keyword id="KW-0863">Zinc-finger</keyword>
<evidence type="ECO:0000255" key="1">
    <source>
        <dbReference type="HAMAP-Rule" id="MF_00440"/>
    </source>
</evidence>
<dbReference type="EMBL" id="AE004439">
    <property type="protein sequence ID" value="AAK02834.1"/>
    <property type="molecule type" value="Genomic_DNA"/>
</dbReference>
<dbReference type="RefSeq" id="WP_005716494.1">
    <property type="nucleotide sequence ID" value="NC_002663.1"/>
</dbReference>
<dbReference type="SMR" id="Q9CMR2"/>
<dbReference type="STRING" id="272843.PM0750"/>
<dbReference type="EnsemblBacteria" id="AAK02834">
    <property type="protein sequence ID" value="AAK02834"/>
    <property type="gene ID" value="PM0750"/>
</dbReference>
<dbReference type="GeneID" id="77207823"/>
<dbReference type="KEGG" id="pmu:PM0750"/>
<dbReference type="HOGENOM" id="CLU_108412_0_0_6"/>
<dbReference type="OrthoDB" id="9807461at2"/>
<dbReference type="Proteomes" id="UP000000809">
    <property type="component" value="Chromosome"/>
</dbReference>
<dbReference type="GO" id="GO:0005524">
    <property type="term" value="F:ATP binding"/>
    <property type="evidence" value="ECO:0007669"/>
    <property type="project" value="UniProtKB-KW"/>
</dbReference>
<dbReference type="GO" id="GO:0003677">
    <property type="term" value="F:DNA binding"/>
    <property type="evidence" value="ECO:0007669"/>
    <property type="project" value="UniProtKB-KW"/>
</dbReference>
<dbReference type="GO" id="GO:0008270">
    <property type="term" value="F:zinc ion binding"/>
    <property type="evidence" value="ECO:0007669"/>
    <property type="project" value="UniProtKB-UniRule"/>
</dbReference>
<dbReference type="GO" id="GO:0045892">
    <property type="term" value="P:negative regulation of DNA-templated transcription"/>
    <property type="evidence" value="ECO:0007669"/>
    <property type="project" value="UniProtKB-UniRule"/>
</dbReference>
<dbReference type="HAMAP" id="MF_00440">
    <property type="entry name" value="NrdR"/>
    <property type="match status" value="1"/>
</dbReference>
<dbReference type="InterPro" id="IPR005144">
    <property type="entry name" value="ATP-cone_dom"/>
</dbReference>
<dbReference type="InterPro" id="IPR055173">
    <property type="entry name" value="NrdR-like_N"/>
</dbReference>
<dbReference type="InterPro" id="IPR003796">
    <property type="entry name" value="RNR_NrdR-like"/>
</dbReference>
<dbReference type="NCBIfam" id="TIGR00244">
    <property type="entry name" value="transcriptional regulator NrdR"/>
    <property type="match status" value="1"/>
</dbReference>
<dbReference type="PANTHER" id="PTHR30455">
    <property type="entry name" value="TRANSCRIPTIONAL REPRESSOR NRDR"/>
    <property type="match status" value="1"/>
</dbReference>
<dbReference type="PANTHER" id="PTHR30455:SF2">
    <property type="entry name" value="TRANSCRIPTIONAL REPRESSOR NRDR"/>
    <property type="match status" value="1"/>
</dbReference>
<dbReference type="Pfam" id="PF03477">
    <property type="entry name" value="ATP-cone"/>
    <property type="match status" value="1"/>
</dbReference>
<dbReference type="Pfam" id="PF22811">
    <property type="entry name" value="Zn_ribbon_NrdR"/>
    <property type="match status" value="1"/>
</dbReference>
<dbReference type="PROSITE" id="PS51161">
    <property type="entry name" value="ATP_CONE"/>
    <property type="match status" value="1"/>
</dbReference>